<comment type="function">
    <text evidence="1">Catalyzes the 2-thiolation of uridine at the wobble position (U34) of tRNA, leading to the formation of s(2)U34.</text>
</comment>
<comment type="catalytic activity">
    <reaction evidence="1">
        <text>S-sulfanyl-L-cysteinyl-[protein] + uridine(34) in tRNA + AH2 + ATP = 2-thiouridine(34) in tRNA + L-cysteinyl-[protein] + A + AMP + diphosphate + H(+)</text>
        <dbReference type="Rhea" id="RHEA:47032"/>
        <dbReference type="Rhea" id="RHEA-COMP:10131"/>
        <dbReference type="Rhea" id="RHEA-COMP:11726"/>
        <dbReference type="Rhea" id="RHEA-COMP:11727"/>
        <dbReference type="Rhea" id="RHEA-COMP:11728"/>
        <dbReference type="ChEBI" id="CHEBI:13193"/>
        <dbReference type="ChEBI" id="CHEBI:15378"/>
        <dbReference type="ChEBI" id="CHEBI:17499"/>
        <dbReference type="ChEBI" id="CHEBI:29950"/>
        <dbReference type="ChEBI" id="CHEBI:30616"/>
        <dbReference type="ChEBI" id="CHEBI:33019"/>
        <dbReference type="ChEBI" id="CHEBI:61963"/>
        <dbReference type="ChEBI" id="CHEBI:65315"/>
        <dbReference type="ChEBI" id="CHEBI:87170"/>
        <dbReference type="ChEBI" id="CHEBI:456215"/>
        <dbReference type="EC" id="2.8.1.13"/>
    </reaction>
</comment>
<comment type="subcellular location">
    <subcellularLocation>
        <location evidence="1">Cytoplasm</location>
    </subcellularLocation>
</comment>
<comment type="similarity">
    <text evidence="1">Belongs to the MnmA/TRMU family.</text>
</comment>
<organism>
    <name type="scientific">Methylococcus capsulatus (strain ATCC 33009 / NCIMB 11132 / Bath)</name>
    <dbReference type="NCBI Taxonomy" id="243233"/>
    <lineage>
        <taxon>Bacteria</taxon>
        <taxon>Pseudomonadati</taxon>
        <taxon>Pseudomonadota</taxon>
        <taxon>Gammaproteobacteria</taxon>
        <taxon>Methylococcales</taxon>
        <taxon>Methylococcaceae</taxon>
        <taxon>Methylococcus</taxon>
    </lineage>
</organism>
<sequence>MKPHVVVGMSGGVDSSVTALLLLRQGYRVSGLFMKNWEEDDGTEYCTAAQDFADAKQVCERLGVELHTVNFAAEYWDEVFEVFLSEYRAGRTPNPDILCNKQIKFRAFLDYAEDLGADLIAMGHYARVAEEEGRLQLLKGCDPGKDQSYFLYTLQQEQLARTLFPLGGLRKTEVRALAAGAGFANDAKKDSTGICFIGERRFKDFLARYLPARPGDIRTPEGVLLGRHDGLMYYTLGQRSGLGIGGTRAGGQEPWYVLDKDLARNVLVVGQGHDHPLLYRDGLLASRLHWVDGAGPAPGEILRCAAKTRYRQSDQDCRIRLIGEDRLEVVFAQPQRAVTPGQSVVFYQDDCCLGGGVIDLTFNADSRADAA</sequence>
<name>MNMA_METCA</name>
<gene>
    <name evidence="1" type="primary">mnmA</name>
    <name type="ordered locus">MCA1785</name>
</gene>
<protein>
    <recommendedName>
        <fullName evidence="1">tRNA-specific 2-thiouridylase MnmA</fullName>
        <ecNumber evidence="1">2.8.1.13</ecNumber>
    </recommendedName>
</protein>
<keyword id="KW-0067">ATP-binding</keyword>
<keyword id="KW-0963">Cytoplasm</keyword>
<keyword id="KW-1015">Disulfide bond</keyword>
<keyword id="KW-0547">Nucleotide-binding</keyword>
<keyword id="KW-1185">Reference proteome</keyword>
<keyword id="KW-0694">RNA-binding</keyword>
<keyword id="KW-0808">Transferase</keyword>
<keyword id="KW-0819">tRNA processing</keyword>
<keyword id="KW-0820">tRNA-binding</keyword>
<feature type="chain" id="PRO_0000349700" description="tRNA-specific 2-thiouridylase MnmA">
    <location>
        <begin position="1"/>
        <end position="371"/>
    </location>
</feature>
<feature type="region of interest" description="Interaction with target base in tRNA" evidence="1">
    <location>
        <begin position="94"/>
        <end position="96"/>
    </location>
</feature>
<feature type="region of interest" description="Interaction with tRNA" evidence="1">
    <location>
        <begin position="145"/>
        <end position="147"/>
    </location>
</feature>
<feature type="region of interest" description="Interaction with tRNA" evidence="1">
    <location>
        <begin position="309"/>
        <end position="310"/>
    </location>
</feature>
<feature type="active site" description="Nucleophile" evidence="1">
    <location>
        <position position="99"/>
    </location>
</feature>
<feature type="active site" description="Cysteine persulfide intermediate" evidence="1">
    <location>
        <position position="195"/>
    </location>
</feature>
<feature type="binding site" evidence="1">
    <location>
        <begin position="8"/>
        <end position="15"/>
    </location>
    <ligand>
        <name>ATP</name>
        <dbReference type="ChEBI" id="CHEBI:30616"/>
    </ligand>
</feature>
<feature type="binding site" evidence="1">
    <location>
        <position position="34"/>
    </location>
    <ligand>
        <name>ATP</name>
        <dbReference type="ChEBI" id="CHEBI:30616"/>
    </ligand>
</feature>
<feature type="binding site" evidence="1">
    <location>
        <position position="123"/>
    </location>
    <ligand>
        <name>ATP</name>
        <dbReference type="ChEBI" id="CHEBI:30616"/>
    </ligand>
</feature>
<feature type="site" description="Interaction with tRNA" evidence="1">
    <location>
        <position position="124"/>
    </location>
</feature>
<feature type="site" description="Interaction with tRNA" evidence="1">
    <location>
        <position position="342"/>
    </location>
</feature>
<feature type="disulfide bond" description="Alternate" evidence="1">
    <location>
        <begin position="99"/>
        <end position="195"/>
    </location>
</feature>
<accession>Q607H5</accession>
<dbReference type="EC" id="2.8.1.13" evidence="1"/>
<dbReference type="EMBL" id="AE017282">
    <property type="protein sequence ID" value="AAU92209.1"/>
    <property type="molecule type" value="Genomic_DNA"/>
</dbReference>
<dbReference type="RefSeq" id="WP_010961038.1">
    <property type="nucleotide sequence ID" value="NC_002977.6"/>
</dbReference>
<dbReference type="SMR" id="Q607H5"/>
<dbReference type="STRING" id="243233.MCA1785"/>
<dbReference type="GeneID" id="88224033"/>
<dbReference type="KEGG" id="mca:MCA1785"/>
<dbReference type="eggNOG" id="COG0482">
    <property type="taxonomic scope" value="Bacteria"/>
</dbReference>
<dbReference type="HOGENOM" id="CLU_035188_1_0_6"/>
<dbReference type="Proteomes" id="UP000006821">
    <property type="component" value="Chromosome"/>
</dbReference>
<dbReference type="GO" id="GO:0005737">
    <property type="term" value="C:cytoplasm"/>
    <property type="evidence" value="ECO:0007669"/>
    <property type="project" value="UniProtKB-SubCell"/>
</dbReference>
<dbReference type="GO" id="GO:0005524">
    <property type="term" value="F:ATP binding"/>
    <property type="evidence" value="ECO:0007669"/>
    <property type="project" value="UniProtKB-KW"/>
</dbReference>
<dbReference type="GO" id="GO:0000049">
    <property type="term" value="F:tRNA binding"/>
    <property type="evidence" value="ECO:0007669"/>
    <property type="project" value="UniProtKB-KW"/>
</dbReference>
<dbReference type="GO" id="GO:0103016">
    <property type="term" value="F:tRNA-uridine 2-sulfurtransferase activity"/>
    <property type="evidence" value="ECO:0007669"/>
    <property type="project" value="UniProtKB-EC"/>
</dbReference>
<dbReference type="GO" id="GO:0002143">
    <property type="term" value="P:tRNA wobble position uridine thiolation"/>
    <property type="evidence" value="ECO:0007669"/>
    <property type="project" value="TreeGrafter"/>
</dbReference>
<dbReference type="CDD" id="cd01998">
    <property type="entry name" value="MnmA_TRMU-like"/>
    <property type="match status" value="1"/>
</dbReference>
<dbReference type="FunFam" id="2.30.30.280:FF:000001">
    <property type="entry name" value="tRNA-specific 2-thiouridylase MnmA"/>
    <property type="match status" value="1"/>
</dbReference>
<dbReference type="FunFam" id="2.40.30.10:FF:000023">
    <property type="entry name" value="tRNA-specific 2-thiouridylase MnmA"/>
    <property type="match status" value="1"/>
</dbReference>
<dbReference type="FunFam" id="3.40.50.620:FF:000004">
    <property type="entry name" value="tRNA-specific 2-thiouridylase MnmA"/>
    <property type="match status" value="1"/>
</dbReference>
<dbReference type="Gene3D" id="2.30.30.280">
    <property type="entry name" value="Adenine nucleotide alpha hydrolases-like domains"/>
    <property type="match status" value="1"/>
</dbReference>
<dbReference type="Gene3D" id="3.40.50.620">
    <property type="entry name" value="HUPs"/>
    <property type="match status" value="1"/>
</dbReference>
<dbReference type="Gene3D" id="2.40.30.10">
    <property type="entry name" value="Translation factors"/>
    <property type="match status" value="1"/>
</dbReference>
<dbReference type="HAMAP" id="MF_00144">
    <property type="entry name" value="tRNA_thiouridyl_MnmA"/>
    <property type="match status" value="1"/>
</dbReference>
<dbReference type="InterPro" id="IPR004506">
    <property type="entry name" value="MnmA-like"/>
</dbReference>
<dbReference type="InterPro" id="IPR046885">
    <property type="entry name" value="MnmA-like_C"/>
</dbReference>
<dbReference type="InterPro" id="IPR046884">
    <property type="entry name" value="MnmA-like_central"/>
</dbReference>
<dbReference type="InterPro" id="IPR023382">
    <property type="entry name" value="MnmA-like_central_sf"/>
</dbReference>
<dbReference type="InterPro" id="IPR014729">
    <property type="entry name" value="Rossmann-like_a/b/a_fold"/>
</dbReference>
<dbReference type="NCBIfam" id="NF001138">
    <property type="entry name" value="PRK00143.1"/>
    <property type="match status" value="1"/>
</dbReference>
<dbReference type="NCBIfam" id="TIGR00420">
    <property type="entry name" value="trmU"/>
    <property type="match status" value="1"/>
</dbReference>
<dbReference type="PANTHER" id="PTHR11933:SF5">
    <property type="entry name" value="MITOCHONDRIAL TRNA-SPECIFIC 2-THIOURIDYLASE 1"/>
    <property type="match status" value="1"/>
</dbReference>
<dbReference type="PANTHER" id="PTHR11933">
    <property type="entry name" value="TRNA 5-METHYLAMINOMETHYL-2-THIOURIDYLATE -METHYLTRANSFERASE"/>
    <property type="match status" value="1"/>
</dbReference>
<dbReference type="Pfam" id="PF03054">
    <property type="entry name" value="tRNA_Me_trans"/>
    <property type="match status" value="1"/>
</dbReference>
<dbReference type="Pfam" id="PF20258">
    <property type="entry name" value="tRNA_Me_trans_C"/>
    <property type="match status" value="1"/>
</dbReference>
<dbReference type="Pfam" id="PF20259">
    <property type="entry name" value="tRNA_Me_trans_M"/>
    <property type="match status" value="1"/>
</dbReference>
<dbReference type="SUPFAM" id="SSF52402">
    <property type="entry name" value="Adenine nucleotide alpha hydrolases-like"/>
    <property type="match status" value="1"/>
</dbReference>
<evidence type="ECO:0000255" key="1">
    <source>
        <dbReference type="HAMAP-Rule" id="MF_00144"/>
    </source>
</evidence>
<proteinExistence type="inferred from homology"/>
<reference key="1">
    <citation type="journal article" date="2004" name="PLoS Biol.">
        <title>Genomic insights into methanotrophy: the complete genome sequence of Methylococcus capsulatus (Bath).</title>
        <authorList>
            <person name="Ward N.L."/>
            <person name="Larsen O."/>
            <person name="Sakwa J."/>
            <person name="Bruseth L."/>
            <person name="Khouri H.M."/>
            <person name="Durkin A.S."/>
            <person name="Dimitrov G."/>
            <person name="Jiang L."/>
            <person name="Scanlan D."/>
            <person name="Kang K.H."/>
            <person name="Lewis M.R."/>
            <person name="Nelson K.E."/>
            <person name="Methe B.A."/>
            <person name="Wu M."/>
            <person name="Heidelberg J.F."/>
            <person name="Paulsen I.T."/>
            <person name="Fouts D.E."/>
            <person name="Ravel J."/>
            <person name="Tettelin H."/>
            <person name="Ren Q."/>
            <person name="Read T.D."/>
            <person name="DeBoy R.T."/>
            <person name="Seshadri R."/>
            <person name="Salzberg S.L."/>
            <person name="Jensen H.B."/>
            <person name="Birkeland N.K."/>
            <person name="Nelson W.C."/>
            <person name="Dodson R.J."/>
            <person name="Grindhaug S.H."/>
            <person name="Holt I.E."/>
            <person name="Eidhammer I."/>
            <person name="Jonasen I."/>
            <person name="Vanaken S."/>
            <person name="Utterback T.R."/>
            <person name="Feldblyum T.V."/>
            <person name="Fraser C.M."/>
            <person name="Lillehaug J.R."/>
            <person name="Eisen J.A."/>
        </authorList>
    </citation>
    <scope>NUCLEOTIDE SEQUENCE [LARGE SCALE GENOMIC DNA]</scope>
    <source>
        <strain>ATCC 33009 / NCIMB 11132 / Bath</strain>
    </source>
</reference>